<proteinExistence type="inferred from homology"/>
<evidence type="ECO:0000255" key="1">
    <source>
        <dbReference type="HAMAP-Rule" id="MF_01341"/>
    </source>
</evidence>
<evidence type="ECO:0000256" key="2">
    <source>
        <dbReference type="SAM" id="MobiDB-lite"/>
    </source>
</evidence>
<evidence type="ECO:0000305" key="3"/>
<comment type="function">
    <text evidence="1">Binds to the 23S rRNA.</text>
</comment>
<comment type="subunit">
    <text evidence="1">Part of the 50S ribosomal subunit.</text>
</comment>
<comment type="similarity">
    <text evidence="1">Belongs to the universal ribosomal protein uL15 family.</text>
</comment>
<name>RL15_RICPU</name>
<protein>
    <recommendedName>
        <fullName evidence="1">Large ribosomal subunit protein uL15</fullName>
    </recommendedName>
    <alternativeName>
        <fullName evidence="3">50S ribosomal protein L15</fullName>
    </alternativeName>
</protein>
<gene>
    <name evidence="1" type="primary">rplO</name>
    <name type="ordered locus">RPR_06135</name>
</gene>
<keyword id="KW-0687">Ribonucleoprotein</keyword>
<keyword id="KW-0689">Ribosomal protein</keyword>
<keyword id="KW-0694">RNA-binding</keyword>
<keyword id="KW-0699">rRNA-binding</keyword>
<dbReference type="EMBL" id="CP001227">
    <property type="protein sequence ID" value="ACR47757.1"/>
    <property type="molecule type" value="Genomic_DNA"/>
</dbReference>
<dbReference type="RefSeq" id="WP_012736938.1">
    <property type="nucleotide sequence ID" value="NC_012730.1"/>
</dbReference>
<dbReference type="SMR" id="C4K2G0"/>
<dbReference type="KEGG" id="rpk:RPR_06135"/>
<dbReference type="HOGENOM" id="CLU_055188_4_0_5"/>
<dbReference type="Proteomes" id="UP000005015">
    <property type="component" value="Chromosome"/>
</dbReference>
<dbReference type="GO" id="GO:0015934">
    <property type="term" value="C:large ribosomal subunit"/>
    <property type="evidence" value="ECO:0007669"/>
    <property type="project" value="InterPro"/>
</dbReference>
<dbReference type="GO" id="GO:0019843">
    <property type="term" value="F:rRNA binding"/>
    <property type="evidence" value="ECO:0007669"/>
    <property type="project" value="UniProtKB-UniRule"/>
</dbReference>
<dbReference type="GO" id="GO:0003735">
    <property type="term" value="F:structural constituent of ribosome"/>
    <property type="evidence" value="ECO:0007669"/>
    <property type="project" value="InterPro"/>
</dbReference>
<dbReference type="GO" id="GO:0006412">
    <property type="term" value="P:translation"/>
    <property type="evidence" value="ECO:0007669"/>
    <property type="project" value="UniProtKB-UniRule"/>
</dbReference>
<dbReference type="Gene3D" id="3.100.10.10">
    <property type="match status" value="1"/>
</dbReference>
<dbReference type="HAMAP" id="MF_01341">
    <property type="entry name" value="Ribosomal_uL15"/>
    <property type="match status" value="1"/>
</dbReference>
<dbReference type="InterPro" id="IPR030878">
    <property type="entry name" value="Ribosomal_uL15"/>
</dbReference>
<dbReference type="InterPro" id="IPR021131">
    <property type="entry name" value="Ribosomal_uL15/eL18"/>
</dbReference>
<dbReference type="InterPro" id="IPR036227">
    <property type="entry name" value="Ribosomal_uL15/eL18_sf"/>
</dbReference>
<dbReference type="InterPro" id="IPR005749">
    <property type="entry name" value="Ribosomal_uL15_bac-type"/>
</dbReference>
<dbReference type="NCBIfam" id="TIGR01071">
    <property type="entry name" value="rplO_bact"/>
    <property type="match status" value="1"/>
</dbReference>
<dbReference type="PANTHER" id="PTHR12934">
    <property type="entry name" value="50S RIBOSOMAL PROTEIN L15"/>
    <property type="match status" value="1"/>
</dbReference>
<dbReference type="PANTHER" id="PTHR12934:SF11">
    <property type="entry name" value="LARGE RIBOSOMAL SUBUNIT PROTEIN UL15M"/>
    <property type="match status" value="1"/>
</dbReference>
<dbReference type="Pfam" id="PF00828">
    <property type="entry name" value="Ribosomal_L27A"/>
    <property type="match status" value="1"/>
</dbReference>
<dbReference type="SUPFAM" id="SSF52080">
    <property type="entry name" value="Ribosomal proteins L15p and L18e"/>
    <property type="match status" value="1"/>
</dbReference>
<organism>
    <name type="scientific">Rickettsia peacockii (strain Rustic)</name>
    <dbReference type="NCBI Taxonomy" id="562019"/>
    <lineage>
        <taxon>Bacteria</taxon>
        <taxon>Pseudomonadati</taxon>
        <taxon>Pseudomonadota</taxon>
        <taxon>Alphaproteobacteria</taxon>
        <taxon>Rickettsiales</taxon>
        <taxon>Rickettsiaceae</taxon>
        <taxon>Rickettsieae</taxon>
        <taxon>Rickettsia</taxon>
        <taxon>spotted fever group</taxon>
    </lineage>
</organism>
<reference key="1">
    <citation type="journal article" date="2009" name="PLoS ONE">
        <title>Genome sequence of the endosymbiont Rickettsia peacockii and comparison with virulent Rickettsia rickettsii: identification of virulence factors.</title>
        <authorList>
            <person name="Felsheim R.F."/>
            <person name="Kurtti T.J."/>
            <person name="Munderloh U.G."/>
        </authorList>
    </citation>
    <scope>NUCLEOTIDE SEQUENCE [LARGE SCALE GENOMIC DNA]</scope>
    <source>
        <strain>Rustic</strain>
    </source>
</reference>
<sequence>MKLNELYNNIGAKKNKKRIARGIGSGKGKTGGRGIKGQKSRSGVAVKGFEGGQTPMIKRLPKRGFNCISTKKYNIINIYNIEEALADGRLSADDNITKEKLVEARVVNNKNNKKLVKLLSICSDDFAAPLSLKLDAYSSKAKDLIEKAGGKLL</sequence>
<feature type="chain" id="PRO_1000214716" description="Large ribosomal subunit protein uL15">
    <location>
        <begin position="1"/>
        <end position="153"/>
    </location>
</feature>
<feature type="region of interest" description="Disordered" evidence="2">
    <location>
        <begin position="21"/>
        <end position="42"/>
    </location>
</feature>
<feature type="compositionally biased region" description="Gly residues" evidence="2">
    <location>
        <begin position="23"/>
        <end position="35"/>
    </location>
</feature>
<accession>C4K2G0</accession>